<protein>
    <recommendedName>
        <fullName evidence="1">Envelope glycoprotein M</fullName>
        <shortName evidence="1">gM</shortName>
    </recommendedName>
</protein>
<reference key="1">
    <citation type="journal article" date="1995" name="J. Gen. Virol.">
        <title>DNA sequence and transcriptional analysis of the glycoprotein M gene of murine cytomegalovirus.</title>
        <authorList>
            <person name="Scalzo A.A."/>
            <person name="Forbes C.A."/>
            <person name="Davis-Poynter N.J."/>
            <person name="Farrell H.E."/>
            <person name="Lyons P.A."/>
        </authorList>
    </citation>
    <scope>NUCLEOTIDE SEQUENCE [GENOMIC DNA]</scope>
    <source>
        <strain>G4</strain>
        <strain>G6</strain>
        <strain>K17B</strain>
        <strain>K17E</strain>
        <strain>K181</strain>
        <strain>K29</strain>
        <strain>N1</strain>
    </source>
</reference>
<accession>P52373</accession>
<evidence type="ECO:0000255" key="1">
    <source>
        <dbReference type="HAMAP-Rule" id="MF_04035"/>
    </source>
</evidence>
<organismHost>
    <name type="scientific">Mus musculus</name>
    <name type="common">Mouse</name>
    <dbReference type="NCBI Taxonomy" id="10090"/>
</organismHost>
<proteinExistence type="inferred from homology"/>
<keyword id="KW-1015">Disulfide bond</keyword>
<keyword id="KW-0325">Glycoprotein</keyword>
<keyword id="KW-1039">Host endosome</keyword>
<keyword id="KW-1040">Host Golgi apparatus</keyword>
<keyword id="KW-1043">Host membrane</keyword>
<keyword id="KW-1048">Host nucleus</keyword>
<keyword id="KW-0472">Membrane</keyword>
<keyword id="KW-0812">Transmembrane</keyword>
<keyword id="KW-1133">Transmembrane helix</keyword>
<keyword id="KW-0261">Viral envelope protein</keyword>
<keyword id="KW-0946">Virion</keyword>
<dbReference type="EMBL" id="L41088">
    <property type="protein sequence ID" value="AAC13736.1"/>
    <property type="molecule type" value="Genomic_DNA"/>
</dbReference>
<dbReference type="EMBL" id="L41089">
    <property type="protein sequence ID" value="AAC05166.1"/>
    <property type="molecule type" value="Genomic_DNA"/>
</dbReference>
<dbReference type="EMBL" id="L41090">
    <property type="protein sequence ID" value="AAC05167.1"/>
    <property type="molecule type" value="Genomic_DNA"/>
</dbReference>
<dbReference type="EMBL" id="L41091">
    <property type="protein sequence ID" value="AAC05168.1"/>
    <property type="molecule type" value="Genomic_DNA"/>
</dbReference>
<dbReference type="EMBL" id="L41092">
    <property type="protein sequence ID" value="AAC05169.1"/>
    <property type="molecule type" value="Genomic_DNA"/>
</dbReference>
<dbReference type="EMBL" id="L41093">
    <property type="protein sequence ID" value="AAC05170.1"/>
    <property type="molecule type" value="Genomic_DNA"/>
</dbReference>
<dbReference type="EMBL" id="L41094">
    <property type="protein sequence ID" value="AAC05171.1"/>
    <property type="molecule type" value="Genomic_DNA"/>
</dbReference>
<dbReference type="GO" id="GO:0044175">
    <property type="term" value="C:host cell endosome membrane"/>
    <property type="evidence" value="ECO:0007669"/>
    <property type="project" value="UniProtKB-SubCell"/>
</dbReference>
<dbReference type="GO" id="GO:0044177">
    <property type="term" value="C:host cell Golgi apparatus"/>
    <property type="evidence" value="ECO:0007669"/>
    <property type="project" value="UniProtKB-SubCell"/>
</dbReference>
<dbReference type="GO" id="GO:0044201">
    <property type="term" value="C:host cell nuclear inner membrane"/>
    <property type="evidence" value="ECO:0007669"/>
    <property type="project" value="UniProtKB-SubCell"/>
</dbReference>
<dbReference type="GO" id="GO:0016020">
    <property type="term" value="C:membrane"/>
    <property type="evidence" value="ECO:0007669"/>
    <property type="project" value="UniProtKB-KW"/>
</dbReference>
<dbReference type="GO" id="GO:0019031">
    <property type="term" value="C:viral envelope"/>
    <property type="evidence" value="ECO:0007669"/>
    <property type="project" value="UniProtKB-KW"/>
</dbReference>
<dbReference type="GO" id="GO:0055036">
    <property type="term" value="C:virion membrane"/>
    <property type="evidence" value="ECO:0007669"/>
    <property type="project" value="UniProtKB-SubCell"/>
</dbReference>
<dbReference type="HAMAP" id="MF_04035">
    <property type="entry name" value="HSV_GM"/>
    <property type="match status" value="1"/>
</dbReference>
<dbReference type="InterPro" id="IPR000785">
    <property type="entry name" value="Herpes_glycop_M"/>
</dbReference>
<dbReference type="Pfam" id="PF01528">
    <property type="entry name" value="Herpes_glycop"/>
    <property type="match status" value="1"/>
</dbReference>
<dbReference type="PRINTS" id="PR00333">
    <property type="entry name" value="HSVINTEGRLMP"/>
</dbReference>
<name>GM_MUHVK</name>
<organism>
    <name type="scientific">Murid herpesvirus 1 (strain K181)</name>
    <name type="common">MuHV-1</name>
    <name type="synonym">Mouse cytomegalovirus</name>
    <dbReference type="NCBI Taxonomy" id="69156"/>
    <lineage>
        <taxon>Viruses</taxon>
        <taxon>Duplodnaviria</taxon>
        <taxon>Heunggongvirae</taxon>
        <taxon>Peploviricota</taxon>
        <taxon>Herviviricetes</taxon>
        <taxon>Herpesvirales</taxon>
        <taxon>Orthoherpesviridae</taxon>
        <taxon>Betaherpesvirinae</taxon>
        <taxon>Muromegalovirus</taxon>
        <taxon>Muromegalovirus muridbeta1</taxon>
        <taxon>Murid herpesvirus 1</taxon>
    </lineage>
</organism>
<comment type="function">
    <text evidence="1">Envelope glycoprotein important for virion assembly and egress. Plays a role in the correct incorporation of gH-gL into virion membrane. Directs the glycoprotein N (gN) to the host trans-Golgi network.</text>
</comment>
<comment type="subunit">
    <text evidence="1">Interacts (via N-terminus) with gN (via N-terminus). The gM-gN heterodimer forms the gCII complex.</text>
</comment>
<comment type="subcellular location">
    <subcellularLocation>
        <location evidence="1">Virion membrane</location>
        <topology evidence="1">Multi-pass membrane protein</topology>
    </subcellularLocation>
    <subcellularLocation>
        <location evidence="1">Host Golgi apparatus</location>
        <location evidence="1">Host trans-Golgi network</location>
    </subcellularLocation>
    <subcellularLocation>
        <location evidence="1">Host endosome membrane</location>
        <topology evidence="1">Multi-pass membrane protein</topology>
    </subcellularLocation>
    <subcellularLocation>
        <location evidence="1">Host nucleus inner membrane</location>
        <topology evidence="1">Multi-pass membrane protein</topology>
    </subcellularLocation>
    <text evidence="1">During virion morphogenesis, this protein accumulates in the trans-Golgi network where secondary envelopment occurs.</text>
</comment>
<comment type="similarity">
    <text evidence="1">Belongs to the herpesviridae glycoprotein M family.</text>
</comment>
<gene>
    <name evidence="1" type="primary">gM</name>
    <name type="ORF">UL100</name>
</gene>
<sequence>MAKAGVMTLSHVDRMNLRTWTMAIACCLLSFVNIVVFSVAAHFPGIGFPCYYPRIIDFDNMNLTMYNAIHHLTPQLFLDPVQLIVYVIFTELIFFCVLSYYIVCWVQIYFRSEHGTQVNQSTRDINFMGDSATCFTFVLTMDTFQIFLLSLSFRLPSMVAFSKCMYFMCLTAFVVTLVTHYESRERSAFALSKIHPKLQGTIRYRTAVVNLTQLILGFATMVLAMSLALGFGNSFFVKTAHVVFGAMVAFAIVACVYFSIIESVLSRYMKVQFGYHIGTILGVCGAMYPIIRYEALNASSYARDINIGITVLLLLCVAFSVIRTVRFLLRRNKRYRALALDNEEIRALRSDAE</sequence>
<feature type="chain" id="PRO_0000115786" description="Envelope glycoprotein M">
    <location>
        <begin position="1"/>
        <end position="353"/>
    </location>
</feature>
<feature type="topological domain" description="Intravirion" evidence="1">
    <location>
        <begin position="1"/>
        <end position="27"/>
    </location>
</feature>
<feature type="transmembrane region" description="Helical" evidence="1">
    <location>
        <begin position="28"/>
        <end position="48"/>
    </location>
</feature>
<feature type="topological domain" description="Virion surface" evidence="1">
    <location>
        <begin position="49"/>
        <end position="82"/>
    </location>
</feature>
<feature type="transmembrane region" description="Helical" evidence="1">
    <location>
        <begin position="83"/>
        <end position="103"/>
    </location>
</feature>
<feature type="topological domain" description="Intravirion" evidence="1">
    <location>
        <begin position="104"/>
        <end position="132"/>
    </location>
</feature>
<feature type="transmembrane region" description="Helical" evidence="1">
    <location>
        <begin position="133"/>
        <end position="153"/>
    </location>
</feature>
<feature type="topological domain" description="Virion surface" evidence="1">
    <location>
        <begin position="154"/>
        <end position="157"/>
    </location>
</feature>
<feature type="transmembrane region" description="Helical" evidence="1">
    <location>
        <begin position="158"/>
        <end position="178"/>
    </location>
</feature>
<feature type="topological domain" description="Intravirion" evidence="1">
    <location>
        <begin position="179"/>
        <end position="210"/>
    </location>
</feature>
<feature type="transmembrane region" description="Helical" evidence="1">
    <location>
        <begin position="211"/>
        <end position="231"/>
    </location>
</feature>
<feature type="topological domain" description="Virion surface" evidence="1">
    <location>
        <begin position="232"/>
        <end position="240"/>
    </location>
</feature>
<feature type="transmembrane region" description="Helical" evidence="1">
    <location>
        <begin position="241"/>
        <end position="261"/>
    </location>
</feature>
<feature type="topological domain" description="Intravirion" evidence="1">
    <location>
        <begin position="262"/>
        <end position="270"/>
    </location>
</feature>
<feature type="transmembrane region" description="Helical" evidence="1">
    <location>
        <begin position="271"/>
        <end position="291"/>
    </location>
</feature>
<feature type="topological domain" description="Virion surface" evidence="1">
    <location>
        <begin position="292"/>
        <end position="304"/>
    </location>
</feature>
<feature type="transmembrane region" description="Helical" evidence="1">
    <location>
        <begin position="305"/>
        <end position="325"/>
    </location>
</feature>
<feature type="topological domain" description="Intravirion" evidence="1">
    <location>
        <begin position="326"/>
        <end position="353"/>
    </location>
</feature>
<feature type="disulfide bond" description="Interchain (with gN)" evidence="1">
    <location>
        <position position="50"/>
    </location>
</feature>